<reference key="1">
    <citation type="journal article" date="2008" name="Environ. Microbiol.">
        <title>The genome of Erwinia tasmaniensis strain Et1/99, a non-pathogenic bacterium in the genus Erwinia.</title>
        <authorList>
            <person name="Kube M."/>
            <person name="Migdoll A.M."/>
            <person name="Mueller I."/>
            <person name="Kuhl H."/>
            <person name="Beck A."/>
            <person name="Reinhardt R."/>
            <person name="Geider K."/>
        </authorList>
    </citation>
    <scope>NUCLEOTIDE SEQUENCE [LARGE SCALE GENOMIC DNA]</scope>
    <source>
        <strain>DSM 17950 / CFBP 7177 / CIP 109463 / NCPPB 4357 / Et1/99</strain>
    </source>
</reference>
<protein>
    <recommendedName>
        <fullName evidence="1">DNA-directed RNA polymerase subunit omega</fullName>
        <shortName evidence="1">RNAP omega subunit</shortName>
        <ecNumber evidence="1">2.7.7.6</ecNumber>
    </recommendedName>
    <alternativeName>
        <fullName evidence="1">RNA polymerase omega subunit</fullName>
    </alternativeName>
    <alternativeName>
        <fullName evidence="1">Transcriptase subunit omega</fullName>
    </alternativeName>
</protein>
<dbReference type="EC" id="2.7.7.6" evidence="1"/>
<dbReference type="EMBL" id="CU468135">
    <property type="protein sequence ID" value="CAO95088.1"/>
    <property type="molecule type" value="Genomic_DNA"/>
</dbReference>
<dbReference type="RefSeq" id="WP_004154766.1">
    <property type="nucleotide sequence ID" value="NC_010694.1"/>
</dbReference>
<dbReference type="SMR" id="B2VL59"/>
<dbReference type="STRING" id="465817.ETA_00420"/>
<dbReference type="GeneID" id="97607703"/>
<dbReference type="KEGG" id="eta:ETA_00420"/>
<dbReference type="eggNOG" id="COG1758">
    <property type="taxonomic scope" value="Bacteria"/>
</dbReference>
<dbReference type="HOGENOM" id="CLU_125406_5_3_6"/>
<dbReference type="OrthoDB" id="9796300at2"/>
<dbReference type="Proteomes" id="UP000001726">
    <property type="component" value="Chromosome"/>
</dbReference>
<dbReference type="GO" id="GO:0000428">
    <property type="term" value="C:DNA-directed RNA polymerase complex"/>
    <property type="evidence" value="ECO:0007669"/>
    <property type="project" value="UniProtKB-KW"/>
</dbReference>
<dbReference type="GO" id="GO:0003677">
    <property type="term" value="F:DNA binding"/>
    <property type="evidence" value="ECO:0007669"/>
    <property type="project" value="UniProtKB-UniRule"/>
</dbReference>
<dbReference type="GO" id="GO:0003899">
    <property type="term" value="F:DNA-directed RNA polymerase activity"/>
    <property type="evidence" value="ECO:0007669"/>
    <property type="project" value="UniProtKB-UniRule"/>
</dbReference>
<dbReference type="GO" id="GO:0006351">
    <property type="term" value="P:DNA-templated transcription"/>
    <property type="evidence" value="ECO:0007669"/>
    <property type="project" value="UniProtKB-UniRule"/>
</dbReference>
<dbReference type="FunFam" id="3.90.940.10:FF:000001">
    <property type="entry name" value="DNA-directed RNA polymerase subunit omega"/>
    <property type="match status" value="1"/>
</dbReference>
<dbReference type="Gene3D" id="3.90.940.10">
    <property type="match status" value="1"/>
</dbReference>
<dbReference type="HAMAP" id="MF_00366">
    <property type="entry name" value="RNApol_bact_RpoZ"/>
    <property type="match status" value="1"/>
</dbReference>
<dbReference type="InterPro" id="IPR003716">
    <property type="entry name" value="DNA-dir_RNA_pol_omega"/>
</dbReference>
<dbReference type="InterPro" id="IPR006110">
    <property type="entry name" value="Pol_omega/Rpo6/RPB6"/>
</dbReference>
<dbReference type="InterPro" id="IPR036161">
    <property type="entry name" value="RPB6/omega-like_sf"/>
</dbReference>
<dbReference type="NCBIfam" id="TIGR00690">
    <property type="entry name" value="rpoZ"/>
    <property type="match status" value="1"/>
</dbReference>
<dbReference type="PANTHER" id="PTHR34476">
    <property type="entry name" value="DNA-DIRECTED RNA POLYMERASE SUBUNIT OMEGA"/>
    <property type="match status" value="1"/>
</dbReference>
<dbReference type="PANTHER" id="PTHR34476:SF1">
    <property type="entry name" value="DNA-DIRECTED RNA POLYMERASE SUBUNIT OMEGA"/>
    <property type="match status" value="1"/>
</dbReference>
<dbReference type="Pfam" id="PF01192">
    <property type="entry name" value="RNA_pol_Rpb6"/>
    <property type="match status" value="1"/>
</dbReference>
<dbReference type="SMART" id="SM01409">
    <property type="entry name" value="RNA_pol_Rpb6"/>
    <property type="match status" value="1"/>
</dbReference>
<dbReference type="SUPFAM" id="SSF63562">
    <property type="entry name" value="RPB6/omega subunit-like"/>
    <property type="match status" value="1"/>
</dbReference>
<organism>
    <name type="scientific">Erwinia tasmaniensis (strain DSM 17950 / CFBP 7177 / CIP 109463 / NCPPB 4357 / Et1/99)</name>
    <dbReference type="NCBI Taxonomy" id="465817"/>
    <lineage>
        <taxon>Bacteria</taxon>
        <taxon>Pseudomonadati</taxon>
        <taxon>Pseudomonadota</taxon>
        <taxon>Gammaproteobacteria</taxon>
        <taxon>Enterobacterales</taxon>
        <taxon>Erwiniaceae</taxon>
        <taxon>Erwinia</taxon>
    </lineage>
</organism>
<comment type="function">
    <text evidence="1">Promotes RNA polymerase assembly. Latches the N- and C-terminal regions of the beta' subunit thereby facilitating its interaction with the beta and alpha subunits.</text>
</comment>
<comment type="catalytic activity">
    <reaction evidence="1">
        <text>RNA(n) + a ribonucleoside 5'-triphosphate = RNA(n+1) + diphosphate</text>
        <dbReference type="Rhea" id="RHEA:21248"/>
        <dbReference type="Rhea" id="RHEA-COMP:14527"/>
        <dbReference type="Rhea" id="RHEA-COMP:17342"/>
        <dbReference type="ChEBI" id="CHEBI:33019"/>
        <dbReference type="ChEBI" id="CHEBI:61557"/>
        <dbReference type="ChEBI" id="CHEBI:140395"/>
        <dbReference type="EC" id="2.7.7.6"/>
    </reaction>
</comment>
<comment type="subunit">
    <text evidence="1">The RNAP catalytic core consists of 2 alpha, 1 beta, 1 beta' and 1 omega subunit. When a sigma factor is associated with the core the holoenzyme is formed, which can initiate transcription.</text>
</comment>
<comment type="similarity">
    <text evidence="1">Belongs to the RNA polymerase subunit omega family.</text>
</comment>
<feature type="chain" id="PRO_1000121223" description="DNA-directed RNA polymerase subunit omega">
    <location>
        <begin position="1"/>
        <end position="91"/>
    </location>
</feature>
<sequence length="91" mass="10205">MARVTVQDAVEKIGNRFDLVLVAARRARQMQVGGKDPLVPEENDKSTVIALREIEEGLITNQILDVRDRQEQHEQEAAELQAVTAIAEGRR</sequence>
<evidence type="ECO:0000255" key="1">
    <source>
        <dbReference type="HAMAP-Rule" id="MF_00366"/>
    </source>
</evidence>
<accession>B2VL59</accession>
<keyword id="KW-0240">DNA-directed RNA polymerase</keyword>
<keyword id="KW-0548">Nucleotidyltransferase</keyword>
<keyword id="KW-1185">Reference proteome</keyword>
<keyword id="KW-0804">Transcription</keyword>
<keyword id="KW-0808">Transferase</keyword>
<name>RPOZ_ERWT9</name>
<gene>
    <name evidence="1" type="primary">rpoZ</name>
    <name type="ordered locus">ETA_00420</name>
</gene>
<proteinExistence type="inferred from homology"/>